<organism>
    <name type="scientific">Saccharomyces cerevisiae (strain ATCC 204508 / S288c)</name>
    <name type="common">Baker's yeast</name>
    <dbReference type="NCBI Taxonomy" id="559292"/>
    <lineage>
        <taxon>Eukaryota</taxon>
        <taxon>Fungi</taxon>
        <taxon>Dikarya</taxon>
        <taxon>Ascomycota</taxon>
        <taxon>Saccharomycotina</taxon>
        <taxon>Saccharomycetes</taxon>
        <taxon>Saccharomycetales</taxon>
        <taxon>Saccharomycetaceae</taxon>
        <taxon>Saccharomyces</taxon>
    </lineage>
</organism>
<reference key="1">
    <citation type="journal article" date="1993" name="Yeast">
        <title>A 12.8 kb segment, on the right arm of chromosome II from Saccharomyces cerevisiae including part of the DUR1,2 gene, contains five putative new genes.</title>
        <authorList>
            <person name="Bussereau F."/>
            <person name="Mallet L."/>
            <person name="Gaillon L."/>
            <person name="Jacquet M."/>
        </authorList>
    </citation>
    <scope>NUCLEOTIDE SEQUENCE [GENOMIC DNA]</scope>
    <source>
        <strain>ATCC 204508 / S288c</strain>
    </source>
</reference>
<reference key="2">
    <citation type="journal article" date="1994" name="EMBO J.">
        <title>Complete DNA sequence of yeast chromosome II.</title>
        <authorList>
            <person name="Feldmann H."/>
            <person name="Aigle M."/>
            <person name="Aljinovic G."/>
            <person name="Andre B."/>
            <person name="Baclet M.C."/>
            <person name="Barthe C."/>
            <person name="Baur A."/>
            <person name="Becam A.-M."/>
            <person name="Biteau N."/>
            <person name="Boles E."/>
            <person name="Brandt T."/>
            <person name="Brendel M."/>
            <person name="Brueckner M."/>
            <person name="Bussereau F."/>
            <person name="Christiansen C."/>
            <person name="Contreras R."/>
            <person name="Crouzet M."/>
            <person name="Cziepluch C."/>
            <person name="Demolis N."/>
            <person name="Delaveau T."/>
            <person name="Doignon F."/>
            <person name="Domdey H."/>
            <person name="Duesterhus S."/>
            <person name="Dubois E."/>
            <person name="Dujon B."/>
            <person name="El Bakkoury M."/>
            <person name="Entian K.-D."/>
            <person name="Feuermann M."/>
            <person name="Fiers W."/>
            <person name="Fobo G.M."/>
            <person name="Fritz C."/>
            <person name="Gassenhuber J."/>
            <person name="Glansdorff N."/>
            <person name="Goffeau A."/>
            <person name="Grivell L.A."/>
            <person name="de Haan M."/>
            <person name="Hein C."/>
            <person name="Herbert C.J."/>
            <person name="Hollenberg C.P."/>
            <person name="Holmstroem K."/>
            <person name="Jacq C."/>
            <person name="Jacquet M."/>
            <person name="Jauniaux J.-C."/>
            <person name="Jonniaux J.-L."/>
            <person name="Kallesoee T."/>
            <person name="Kiesau P."/>
            <person name="Kirchrath L."/>
            <person name="Koetter P."/>
            <person name="Korol S."/>
            <person name="Liebl S."/>
            <person name="Logghe M."/>
            <person name="Lohan A.J.E."/>
            <person name="Louis E.J."/>
            <person name="Li Z.Y."/>
            <person name="Maat M.J."/>
            <person name="Mallet L."/>
            <person name="Mannhaupt G."/>
            <person name="Messenguy F."/>
            <person name="Miosga T."/>
            <person name="Molemans F."/>
            <person name="Mueller S."/>
            <person name="Nasr F."/>
            <person name="Obermaier B."/>
            <person name="Perea J."/>
            <person name="Pierard A."/>
            <person name="Piravandi E."/>
            <person name="Pohl F.M."/>
            <person name="Pohl T.M."/>
            <person name="Potier S."/>
            <person name="Proft M."/>
            <person name="Purnelle B."/>
            <person name="Ramezani Rad M."/>
            <person name="Rieger M."/>
            <person name="Rose M."/>
            <person name="Schaaff-Gerstenschlaeger I."/>
            <person name="Scherens B."/>
            <person name="Schwarzlose C."/>
            <person name="Skala J."/>
            <person name="Slonimski P.P."/>
            <person name="Smits P.H.M."/>
            <person name="Souciet J.-L."/>
            <person name="Steensma H.Y."/>
            <person name="Stucka R."/>
            <person name="Urrestarazu L.A."/>
            <person name="van der Aart Q.J.M."/>
            <person name="Van Dyck L."/>
            <person name="Vassarotti A."/>
            <person name="Vetter I."/>
            <person name="Vierendeels F."/>
            <person name="Vissers S."/>
            <person name="Wagner G."/>
            <person name="de Wergifosse P."/>
            <person name="Wolfe K.H."/>
            <person name="Zagulski M."/>
            <person name="Zimmermann F.K."/>
            <person name="Mewes H.-W."/>
            <person name="Kleine K."/>
        </authorList>
    </citation>
    <scope>NUCLEOTIDE SEQUENCE [LARGE SCALE GENOMIC DNA]</scope>
    <source>
        <strain>ATCC 204508 / S288c</strain>
    </source>
</reference>
<reference key="3">
    <citation type="journal article" date="2014" name="G3 (Bethesda)">
        <title>The reference genome sequence of Saccharomyces cerevisiae: Then and now.</title>
        <authorList>
            <person name="Engel S.R."/>
            <person name="Dietrich F.S."/>
            <person name="Fisk D.G."/>
            <person name="Binkley G."/>
            <person name="Balakrishnan R."/>
            <person name="Costanzo M.C."/>
            <person name="Dwight S.S."/>
            <person name="Hitz B.C."/>
            <person name="Karra K."/>
            <person name="Nash R.S."/>
            <person name="Weng S."/>
            <person name="Wong E.D."/>
            <person name="Lloyd P."/>
            <person name="Skrzypek M.S."/>
            <person name="Miyasato S.R."/>
            <person name="Simison M."/>
            <person name="Cherry J.M."/>
        </authorList>
    </citation>
    <scope>GENOME REANNOTATION</scope>
    <scope>SEQUENCE REVISION TO 63</scope>
    <source>
        <strain>ATCC 204508 / S288c</strain>
    </source>
</reference>
<reference key="4">
    <citation type="journal article" date="2004" name="Mol. Cell. Proteomics">
        <title>Synergistic computational and experimental proteomics approaches for more accurate detection of active serine hydrolases in yeast.</title>
        <authorList>
            <person name="Baxter S.M."/>
            <person name="Rosenblum J.S."/>
            <person name="Knutson S."/>
            <person name="Nelson M.R."/>
            <person name="Montimurro J.S."/>
            <person name="Di Gennaro J.A."/>
            <person name="Speir J.A."/>
            <person name="Burbaum J.J."/>
            <person name="Fetrow J.S."/>
        </authorList>
    </citation>
    <scope>PREDICTION OF FUNCTION</scope>
</reference>
<reference key="5">
    <citation type="journal article" date="2011" name="Eukaryot. Cell">
        <title>The putative yeast hydrolase Ldh1p is localized to Lipid droplets.</title>
        <authorList>
            <person name="Thoms S."/>
            <person name="Debelyy M.O."/>
            <person name="Connerth M."/>
            <person name="Daum G."/>
            <person name="Erdmann R."/>
        </authorList>
    </citation>
    <scope>SUBCELLULAR LOCATION</scope>
</reference>
<reference key="6">
    <citation type="journal article" date="2011" name="Eukaryot. Cell">
        <title>Involvement of the yeast hydrolase Ldh1p in lipid homeostasis.</title>
        <authorList>
            <person name="Debelyy M.O."/>
            <person name="Thoms S."/>
            <person name="Connerth M."/>
            <person name="Daum G."/>
            <person name="Erdmann R."/>
        </authorList>
    </citation>
    <scope>FUNCTION</scope>
    <scope>CATALYTIC ACTIVITY</scope>
    <scope>BIOPHYSICOCHEMICAL PROPERTIES</scope>
    <scope>MUTAGENESIS OF SER-177</scope>
    <scope>DISRUPTION PHENOTYPE</scope>
</reference>
<comment type="function">
    <text evidence="4">Serine hydrolase required for the maintenance of steady state level of non-polar and polar lipids of lipid droplets and thus plays a role in maintaining the lipids homeostasis (PubMed:21478434). Exhibits both esterase and triacylglycerol lipase activity (PubMed:21478434).</text>
</comment>
<comment type="catalytic activity">
    <reaction evidence="4">
        <text>a triacylglycerol + H2O = a diacylglycerol + a fatty acid + H(+)</text>
        <dbReference type="Rhea" id="RHEA:12044"/>
        <dbReference type="ChEBI" id="CHEBI:15377"/>
        <dbReference type="ChEBI" id="CHEBI:15378"/>
        <dbReference type="ChEBI" id="CHEBI:17855"/>
        <dbReference type="ChEBI" id="CHEBI:18035"/>
        <dbReference type="ChEBI" id="CHEBI:28868"/>
        <dbReference type="EC" id="3.1.1.3"/>
    </reaction>
</comment>
<comment type="biophysicochemical properties">
    <kinetics>
        <KM evidence="4">0.77 uM for p-nitrophenyl butyrate (PNB)</KM>
        <KM evidence="4">3.3 mM for 1,2-dioleoyl-3-(pyren-1-yl)-decanoyl-rac-glycerol (DPG)</KM>
        <Vmax evidence="4">0.041 umol/min/mg enzyme for esterase activity using PNB as a substrate</Vmax>
        <Vmax evidence="4">1.0 umol/min/mg enzyme for triacylglycerol lipase activity using DPG as a substrate</Vmax>
    </kinetics>
</comment>
<comment type="subcellular location">
    <subcellularLocation>
        <location evidence="3">Lipid droplet</location>
    </subcellularLocation>
</comment>
<comment type="disruption phenotype">
    <text evidence="4">Leads to the appearance of giant lipid droplets and an excessive accumulation of non-polar lipids and phospholipids upon growth on medium containing oleic acid as a sole carbon source.</text>
</comment>
<comment type="similarity">
    <text evidence="6">Belongs to the AB hydrolase superfamily. Lipase family.</text>
</comment>
<sequence length="375" mass="43287">MNMAERAEATKSWSCEPLSGKTLEEIVQNAENAADLVAYIRKPEVDLDFRLKFIAEHEEFFNVQLSDRNSRIRTCHNLSDKGIRGDTVFVFVPGLAGNLEQFEPLLELVDSDQKAFLTLDLPGFGHSSEWSDYPMLKVVELIFVLVCDVLRKWSTAVPNNDNVNPFNGHKIVLVGHSMGCFLACHLYEQHMADTKAVQTLVLLTPPKAHIEQLSKDKHIIQWALYGVFKLPWLFDVYRNKFDQVKGLQSSGIKQYFYQQGDDVKLKYRKFWQFKNNISNKSRTIIGYLLGWETVDWVKFNGVLTQTDMKQKIIIFGAEKDPIAPIENLEFYKQTINKECLRKVIILPDCSHNLCFDRPELVCENFQREVIDNSKL</sequence>
<proteinExistence type="evidence at protein level"/>
<dbReference type="EC" id="3.1.1.3" evidence="4"/>
<dbReference type="EMBL" id="Z21487">
    <property type="protein sequence ID" value="CAA79692.1"/>
    <property type="molecule type" value="Genomic_DNA"/>
</dbReference>
<dbReference type="EMBL" id="Z36073">
    <property type="protein sequence ID" value="CAA85168.1"/>
    <property type="molecule type" value="Genomic_DNA"/>
</dbReference>
<dbReference type="EMBL" id="BK006936">
    <property type="protein sequence ID" value="DAA07322.2"/>
    <property type="molecule type" value="Genomic_DNA"/>
</dbReference>
<dbReference type="PIR" id="S34927">
    <property type="entry name" value="S34927"/>
</dbReference>
<dbReference type="RefSeq" id="NP_009763.2">
    <property type="nucleotide sequence ID" value="NM_001178552.2"/>
</dbReference>
<dbReference type="BioGRID" id="32901">
    <property type="interactions" value="49"/>
</dbReference>
<dbReference type="DIP" id="DIP-4009N"/>
<dbReference type="FunCoup" id="P38139">
    <property type="interactions" value="41"/>
</dbReference>
<dbReference type="IntAct" id="P38139">
    <property type="interactions" value="1"/>
</dbReference>
<dbReference type="STRING" id="4932.YBR204C"/>
<dbReference type="ESTHER" id="yeast-LDH1">
    <property type="family name" value="AlphaBeta_hydrolase"/>
</dbReference>
<dbReference type="iPTMnet" id="P38139"/>
<dbReference type="PaxDb" id="4932-YBR204C"/>
<dbReference type="PeptideAtlas" id="P38139"/>
<dbReference type="EnsemblFungi" id="YBR204C_mRNA">
    <property type="protein sequence ID" value="YBR204C"/>
    <property type="gene ID" value="YBR204C"/>
</dbReference>
<dbReference type="GeneID" id="852503"/>
<dbReference type="KEGG" id="sce:YBR204C"/>
<dbReference type="AGR" id="SGD:S000000408"/>
<dbReference type="SGD" id="S000000408">
    <property type="gene designation" value="LDH1"/>
</dbReference>
<dbReference type="VEuPathDB" id="FungiDB:YBR204C"/>
<dbReference type="eggNOG" id="ENOG502QVGS">
    <property type="taxonomic scope" value="Eukaryota"/>
</dbReference>
<dbReference type="GeneTree" id="ENSGT00940000176535"/>
<dbReference type="HOGENOM" id="CLU_068926_0_0_1"/>
<dbReference type="InParanoid" id="P38139"/>
<dbReference type="OMA" id="YRKLWQF"/>
<dbReference type="OrthoDB" id="428974at2759"/>
<dbReference type="BioCyc" id="YEAST:YBR204C-MONOMER"/>
<dbReference type="Reactome" id="R-SCE-426048">
    <property type="pathway name" value="Arachidonate production from DAG"/>
</dbReference>
<dbReference type="SABIO-RK" id="P38139"/>
<dbReference type="BioGRID-ORCS" id="852503">
    <property type="hits" value="3 hits in 10 CRISPR screens"/>
</dbReference>
<dbReference type="PRO" id="PR:P38139"/>
<dbReference type="Proteomes" id="UP000002311">
    <property type="component" value="Chromosome II"/>
</dbReference>
<dbReference type="RNAct" id="P38139">
    <property type="molecule type" value="protein"/>
</dbReference>
<dbReference type="GO" id="GO:0005783">
    <property type="term" value="C:endoplasmic reticulum"/>
    <property type="evidence" value="ECO:0007005"/>
    <property type="project" value="SGD"/>
</dbReference>
<dbReference type="GO" id="GO:0005811">
    <property type="term" value="C:lipid droplet"/>
    <property type="evidence" value="ECO:0000314"/>
    <property type="project" value="SGD"/>
</dbReference>
<dbReference type="GO" id="GO:0016020">
    <property type="term" value="C:membrane"/>
    <property type="evidence" value="ECO:0000318"/>
    <property type="project" value="GO_Central"/>
</dbReference>
<dbReference type="GO" id="GO:0016788">
    <property type="term" value="F:hydrolase activity, acting on ester bonds"/>
    <property type="evidence" value="ECO:0000314"/>
    <property type="project" value="SGD"/>
</dbReference>
<dbReference type="GO" id="GO:0047372">
    <property type="term" value="F:monoacylglycerol lipase activity"/>
    <property type="evidence" value="ECO:0000318"/>
    <property type="project" value="GO_Central"/>
</dbReference>
<dbReference type="GO" id="GO:0017171">
    <property type="term" value="F:serine hydrolase activity"/>
    <property type="evidence" value="ECO:0007005"/>
    <property type="project" value="SGD"/>
</dbReference>
<dbReference type="GO" id="GO:0004806">
    <property type="term" value="F:triacylglycerol lipase activity"/>
    <property type="evidence" value="ECO:0000314"/>
    <property type="project" value="SGD"/>
</dbReference>
<dbReference type="GO" id="GO:0046464">
    <property type="term" value="P:acylglycerol catabolic process"/>
    <property type="evidence" value="ECO:0000318"/>
    <property type="project" value="GO_Central"/>
</dbReference>
<dbReference type="GO" id="GO:0055088">
    <property type="term" value="P:lipid homeostasis"/>
    <property type="evidence" value="ECO:0000315"/>
    <property type="project" value="SGD"/>
</dbReference>
<dbReference type="FunFam" id="3.40.50.1820:FF:000458">
    <property type="entry name" value="LDH1p Serine hydrolase"/>
    <property type="match status" value="1"/>
</dbReference>
<dbReference type="Gene3D" id="3.40.50.1820">
    <property type="entry name" value="alpha/beta hydrolase"/>
    <property type="match status" value="1"/>
</dbReference>
<dbReference type="InterPro" id="IPR000073">
    <property type="entry name" value="AB_hydrolase_1"/>
</dbReference>
<dbReference type="InterPro" id="IPR029058">
    <property type="entry name" value="AB_hydrolase_fold"/>
</dbReference>
<dbReference type="InterPro" id="IPR050266">
    <property type="entry name" value="AB_hydrolase_sf"/>
</dbReference>
<dbReference type="PANTHER" id="PTHR43798">
    <property type="entry name" value="MONOACYLGLYCEROL LIPASE"/>
    <property type="match status" value="1"/>
</dbReference>
<dbReference type="PANTHER" id="PTHR43798:SF5">
    <property type="entry name" value="MONOACYLGLYCEROL LIPASE ABHD6"/>
    <property type="match status" value="1"/>
</dbReference>
<dbReference type="Pfam" id="PF00561">
    <property type="entry name" value="Abhydrolase_1"/>
    <property type="match status" value="1"/>
</dbReference>
<dbReference type="SUPFAM" id="SSF53474">
    <property type="entry name" value="alpha/beta-Hydrolases"/>
    <property type="match status" value="1"/>
</dbReference>
<dbReference type="PROSITE" id="PS00120">
    <property type="entry name" value="LIPASE_SER"/>
    <property type="match status" value="1"/>
</dbReference>
<evidence type="ECO:0000250" key="1">
    <source>
        <dbReference type="UniProtKB" id="O75608"/>
    </source>
</evidence>
<evidence type="ECO:0000255" key="2"/>
<evidence type="ECO:0000269" key="3">
    <source>
    </source>
</evidence>
<evidence type="ECO:0000269" key="4">
    <source>
    </source>
</evidence>
<evidence type="ECO:0000303" key="5">
    <source>
    </source>
</evidence>
<evidence type="ECO:0000305" key="6"/>
<gene>
    <name evidence="5" type="primary">LDH1</name>
    <name type="ordered locus">YBR204C</name>
    <name type="ORF">YBR1444</name>
</gene>
<keyword id="KW-0378">Hydrolase</keyword>
<keyword id="KW-0442">Lipid degradation</keyword>
<keyword id="KW-0551">Lipid droplet</keyword>
<keyword id="KW-0443">Lipid metabolism</keyword>
<keyword id="KW-1185">Reference proteome</keyword>
<accession>P38139</accession>
<accession>D6VQK2</accession>
<feature type="chain" id="PRO_0000090373" description="Lipid droplet hydrolase 1">
    <location>
        <begin position="1"/>
        <end position="375"/>
    </location>
</feature>
<feature type="domain" description="AB hydrolase-1" evidence="2">
    <location>
        <begin position="88"/>
        <end position="358"/>
    </location>
</feature>
<feature type="short sequence motif" description="Microbody targeting signal" evidence="2">
    <location>
        <begin position="373"/>
        <end position="375"/>
    </location>
</feature>
<feature type="active site" description="Charge relay system" evidence="1">
    <location>
        <position position="177"/>
    </location>
</feature>
<feature type="mutagenesis site" description="Abolishes serine hydrolase activity." evidence="4">
    <original>S</original>
    <variation>A</variation>
    <location>
        <position position="177"/>
    </location>
</feature>
<feature type="sequence conflict" description="In Ref. 1; CAA79692 and 2; CAA85168." evidence="6" ref="1 2">
    <original>V</original>
    <variation>E</variation>
    <location>
        <position position="63"/>
    </location>
</feature>
<protein>
    <recommendedName>
        <fullName evidence="5">Lipid droplet hydrolase 1</fullName>
        <ecNumber evidence="4">3.1.1.3</ecNumber>
    </recommendedName>
    <alternativeName>
        <fullName evidence="5">Lipid esterase</fullName>
    </alternativeName>
    <alternativeName>
        <fullName evidence="5">Triacylglycerol lipase</fullName>
    </alternativeName>
</protein>
<name>LDH1_YEAST</name>